<comment type="function">
    <text evidence="1">Catalyzes the transfer of the gamma-phospho group of ATP to thymidine to generate dTMP in the salvage pathway of pyrimidine synthesis. The dTMP serves as a substrate for DNA polymerase during viral DNA replication. Allows the virus to be reactivated and to grow in non-proliferative cells lacking a high concentration of phosphorylated nucleic acid precursors.</text>
</comment>
<comment type="catalytic activity">
    <reaction evidence="1">
        <text>thymidine + ATP = dTMP + ADP + H(+)</text>
        <dbReference type="Rhea" id="RHEA:19129"/>
        <dbReference type="ChEBI" id="CHEBI:15378"/>
        <dbReference type="ChEBI" id="CHEBI:17748"/>
        <dbReference type="ChEBI" id="CHEBI:30616"/>
        <dbReference type="ChEBI" id="CHEBI:63528"/>
        <dbReference type="ChEBI" id="CHEBI:456216"/>
        <dbReference type="EC" id="2.7.1.21"/>
    </reaction>
</comment>
<comment type="subunit">
    <text evidence="1">Homodimer.</text>
</comment>
<comment type="similarity">
    <text evidence="1">Belongs to the herpesviridae thymidine kinase family.</text>
</comment>
<name>KITH_SHV1</name>
<feature type="chain" id="PRO_0000175078" description="Thymidine kinase">
    <location>
        <begin position="1"/>
        <end position="361"/>
    </location>
</feature>
<feature type="active site" description="Proton acceptor" evidence="1">
    <location>
        <position position="46"/>
    </location>
</feature>
<feature type="binding site" evidence="1">
    <location>
        <begin position="17"/>
        <end position="24"/>
    </location>
    <ligand>
        <name>ATP</name>
        <dbReference type="ChEBI" id="CHEBI:30616"/>
    </ligand>
</feature>
<feature type="binding site" evidence="1">
    <location>
        <position position="64"/>
    </location>
    <ligand>
        <name>substrate</name>
    </ligand>
</feature>
<feature type="binding site" evidence="1">
    <location>
        <position position="88"/>
    </location>
    <ligand>
        <name>substrate</name>
    </ligand>
</feature>
<feature type="binding site" evidence="1">
    <location>
        <position position="184"/>
    </location>
    <ligand>
        <name>ATP</name>
        <dbReference type="ChEBI" id="CHEBI:30616"/>
    </ligand>
</feature>
<feature type="binding site" evidence="1">
    <location>
        <position position="190"/>
    </location>
    <ligand>
        <name>substrate</name>
    </ligand>
</feature>
<protein>
    <recommendedName>
        <fullName evidence="1">Thymidine kinase</fullName>
        <ecNumber evidence="1">2.7.1.21</ecNumber>
    </recommendedName>
</protein>
<sequence>MSGTAGTSRILRVYLDGPHGVGKSTTAEALVARCEPRRPIRSMLQEPMAYWRSTFASDAITEIYDTQHRLDSNEITAAEAGAFMTSLQLHMGTPYALLEEAMRPHVGRELAEPDDNGPLPQRRDFVLVVDRHAVASMVCYPLARFMMGCVSLRSVASLISHLPPPLPGTNLVVASLDFREHAARLRARARPGERLDLTMMAAIRNAYAMLANTSRYLLSGGDWRRDWGSLPVFKPSAFVARAAKTAYTLPLRDEPGLADTLFAALKVPEFLDARGYPRAAHAWTLDILANRIRALRVYTLDLTGPPEACAAAFRRLCAGLVLTEGSHPGALCELKRAAAAYAREMSVVGSREPTTAEVESA</sequence>
<accession>P04408</accession>
<reference key="1">
    <citation type="journal article" date="1984" name="Virology">
        <title>Nucleotide sequence of the marmoset herpesvirus thymidine kinase gene and predicted amino acid sequence of thymidine kinase polypeptide.</title>
        <authorList>
            <person name="Otsuka H."/>
            <person name="Kit S."/>
        </authorList>
    </citation>
    <scope>NUCLEOTIDE SEQUENCE [GENOMIC DNA]</scope>
</reference>
<reference key="2">
    <citation type="submission" date="1989-06" db="EMBL/GenBank/DDBJ databases">
        <authorList>
            <person name="Kit S."/>
        </authorList>
    </citation>
    <scope>SEQUENCE REVISION</scope>
</reference>
<gene>
    <name evidence="1" type="primary">TK</name>
</gene>
<proteinExistence type="inferred from homology"/>
<keyword id="KW-0067">ATP-binding</keyword>
<keyword id="KW-0237">DNA synthesis</keyword>
<keyword id="KW-0244">Early protein</keyword>
<keyword id="KW-0418">Kinase</keyword>
<keyword id="KW-0547">Nucleotide-binding</keyword>
<keyword id="KW-0808">Transferase</keyword>
<dbReference type="EC" id="2.7.1.21" evidence="1"/>
<dbReference type="EMBL" id="K02122">
    <property type="protein sequence ID" value="AAA67102.1"/>
    <property type="molecule type" value="Genomic_DNA"/>
</dbReference>
<dbReference type="PIR" id="A00614">
    <property type="entry name" value="KIBETM"/>
</dbReference>
<dbReference type="SMR" id="P04408"/>
<dbReference type="GO" id="GO:0005524">
    <property type="term" value="F:ATP binding"/>
    <property type="evidence" value="ECO:0007669"/>
    <property type="project" value="UniProtKB-KW"/>
</dbReference>
<dbReference type="GO" id="GO:0004797">
    <property type="term" value="F:thymidine kinase activity"/>
    <property type="evidence" value="ECO:0007669"/>
    <property type="project" value="UniProtKB-EC"/>
</dbReference>
<dbReference type="GO" id="GO:0071897">
    <property type="term" value="P:DNA biosynthetic process"/>
    <property type="evidence" value="ECO:0007669"/>
    <property type="project" value="UniProtKB-KW"/>
</dbReference>
<dbReference type="GO" id="GO:0006230">
    <property type="term" value="P:TMP biosynthetic process"/>
    <property type="evidence" value="ECO:0007669"/>
    <property type="project" value="InterPro"/>
</dbReference>
<dbReference type="CDD" id="cd02019">
    <property type="entry name" value="NK"/>
    <property type="match status" value="1"/>
</dbReference>
<dbReference type="Gene3D" id="3.40.50.300">
    <property type="entry name" value="P-loop containing nucleotide triphosphate hydrolases"/>
    <property type="match status" value="1"/>
</dbReference>
<dbReference type="HAMAP" id="MF_04029">
    <property type="entry name" value="HSV_KITH"/>
    <property type="match status" value="1"/>
</dbReference>
<dbReference type="InterPro" id="IPR001889">
    <property type="entry name" value="Herpes_TK"/>
</dbReference>
<dbReference type="InterPro" id="IPR027417">
    <property type="entry name" value="P-loop_NTPase"/>
</dbReference>
<dbReference type="Pfam" id="PF00693">
    <property type="entry name" value="Herpes_TK"/>
    <property type="match status" value="1"/>
</dbReference>
<dbReference type="SUPFAM" id="SSF52540">
    <property type="entry name" value="P-loop containing nucleoside triphosphate hydrolases"/>
    <property type="match status" value="1"/>
</dbReference>
<organism>
    <name type="scientific">Saimiriine herpesvirus 1 (strain MV-5-4-PSL)</name>
    <name type="common">SaHV-1</name>
    <name type="synonym">Marmoset herpesvirus</name>
    <dbReference type="NCBI Taxonomy" id="10353"/>
    <lineage>
        <taxon>Viruses</taxon>
        <taxon>Duplodnaviria</taxon>
        <taxon>Heunggongvirae</taxon>
        <taxon>Peploviricota</taxon>
        <taxon>Herviviricetes</taxon>
        <taxon>Herpesvirales</taxon>
        <taxon>Orthoherpesviridae</taxon>
        <taxon>Alphaherpesvirinae</taxon>
        <taxon>Simplexvirus</taxon>
        <taxon>Simplexvirus saimiriinealpha1</taxon>
    </lineage>
</organism>
<organismHost>
    <name type="scientific">Callithrix</name>
    <dbReference type="NCBI Taxonomy" id="9481"/>
</organismHost>
<organismHost>
    <name type="scientific">Saimiri</name>
    <name type="common">squirrel monkeys</name>
    <dbReference type="NCBI Taxonomy" id="9520"/>
</organismHost>
<evidence type="ECO:0000255" key="1">
    <source>
        <dbReference type="HAMAP-Rule" id="MF_04029"/>
    </source>
</evidence>